<name>YPH5_THIVI</name>
<dbReference type="EMBL" id="L01113">
    <property type="protein sequence ID" value="AAB02863.1"/>
    <property type="molecule type" value="Genomic_DNA"/>
</dbReference>
<dbReference type="EMBL" id="S54369">
    <property type="protein sequence ID" value="AAC60431.1"/>
    <property type="molecule type" value="Genomic_DNA"/>
</dbReference>
<dbReference type="PIR" id="E48376">
    <property type="entry name" value="E48376"/>
</dbReference>
<dbReference type="RefSeq" id="WP_242482321.1">
    <property type="nucleotide sequence ID" value="NZ_NRRF01000016.1"/>
</dbReference>
<dbReference type="SMR" id="P45365"/>
<dbReference type="GO" id="GO:0071111">
    <property type="term" value="F:cyclic-guanylate-specific phosphodiesterase activity"/>
    <property type="evidence" value="ECO:0007669"/>
    <property type="project" value="InterPro"/>
</dbReference>
<dbReference type="GO" id="GO:0000160">
    <property type="term" value="P:phosphorelay signal transduction system"/>
    <property type="evidence" value="ECO:0007669"/>
    <property type="project" value="UniProtKB-KW"/>
</dbReference>
<dbReference type="CDD" id="cd01948">
    <property type="entry name" value="EAL"/>
    <property type="match status" value="1"/>
</dbReference>
<dbReference type="CDD" id="cd00156">
    <property type="entry name" value="REC"/>
    <property type="match status" value="1"/>
</dbReference>
<dbReference type="Gene3D" id="3.30.70.270">
    <property type="match status" value="1"/>
</dbReference>
<dbReference type="Gene3D" id="3.40.50.2300">
    <property type="match status" value="1"/>
</dbReference>
<dbReference type="Gene3D" id="3.20.20.450">
    <property type="entry name" value="EAL domain"/>
    <property type="match status" value="1"/>
</dbReference>
<dbReference type="InterPro" id="IPR011006">
    <property type="entry name" value="CheY-like_superfamily"/>
</dbReference>
<dbReference type="InterPro" id="IPR050706">
    <property type="entry name" value="Cyclic-di-GMP_PDE-like"/>
</dbReference>
<dbReference type="InterPro" id="IPR001633">
    <property type="entry name" value="EAL_dom"/>
</dbReference>
<dbReference type="InterPro" id="IPR035919">
    <property type="entry name" value="EAL_sf"/>
</dbReference>
<dbReference type="InterPro" id="IPR000160">
    <property type="entry name" value="GGDEF_dom"/>
</dbReference>
<dbReference type="InterPro" id="IPR029787">
    <property type="entry name" value="Nucleotide_cyclase"/>
</dbReference>
<dbReference type="InterPro" id="IPR043128">
    <property type="entry name" value="Rev_trsase/Diguanyl_cyclase"/>
</dbReference>
<dbReference type="InterPro" id="IPR001789">
    <property type="entry name" value="Sig_transdc_resp-reg_receiver"/>
</dbReference>
<dbReference type="PANTHER" id="PTHR33121:SF23">
    <property type="entry name" value="CYCLIC DI-GMP PHOSPHODIESTERASE PDEB"/>
    <property type="match status" value="1"/>
</dbReference>
<dbReference type="PANTHER" id="PTHR33121">
    <property type="entry name" value="CYCLIC DI-GMP PHOSPHODIESTERASE PDEF"/>
    <property type="match status" value="1"/>
</dbReference>
<dbReference type="Pfam" id="PF00563">
    <property type="entry name" value="EAL"/>
    <property type="match status" value="1"/>
</dbReference>
<dbReference type="Pfam" id="PF00990">
    <property type="entry name" value="GGDEF"/>
    <property type="match status" value="1"/>
</dbReference>
<dbReference type="Pfam" id="PF00072">
    <property type="entry name" value="Response_reg"/>
    <property type="match status" value="1"/>
</dbReference>
<dbReference type="SMART" id="SM00052">
    <property type="entry name" value="EAL"/>
    <property type="match status" value="1"/>
</dbReference>
<dbReference type="SMART" id="SM00267">
    <property type="entry name" value="GGDEF"/>
    <property type="match status" value="1"/>
</dbReference>
<dbReference type="SMART" id="SM00448">
    <property type="entry name" value="REC"/>
    <property type="match status" value="1"/>
</dbReference>
<dbReference type="SUPFAM" id="SSF52172">
    <property type="entry name" value="CheY-like"/>
    <property type="match status" value="2"/>
</dbReference>
<dbReference type="SUPFAM" id="SSF141868">
    <property type="entry name" value="EAL domain-like"/>
    <property type="match status" value="1"/>
</dbReference>
<dbReference type="SUPFAM" id="SSF55073">
    <property type="entry name" value="Nucleotide cyclase"/>
    <property type="match status" value="1"/>
</dbReference>
<dbReference type="PROSITE" id="PS50883">
    <property type="entry name" value="EAL"/>
    <property type="match status" value="1"/>
</dbReference>
<dbReference type="PROSITE" id="PS50887">
    <property type="entry name" value="GGDEF"/>
    <property type="match status" value="1"/>
</dbReference>
<dbReference type="PROSITE" id="PS50110">
    <property type="entry name" value="RESPONSE_REGULATORY"/>
    <property type="match status" value="2"/>
</dbReference>
<feature type="chain" id="PRO_0000081359" description="Uncharacterized 76.5 kDa protein in phbC 3'region">
    <location>
        <begin position="1"/>
        <end position="692"/>
    </location>
</feature>
<feature type="domain" description="Response regulatory 1" evidence="3">
    <location>
        <begin position="9"/>
        <end position="130"/>
    </location>
</feature>
<feature type="domain" description="Response regulatory 2" evidence="3">
    <location>
        <begin position="139"/>
        <end position="255"/>
    </location>
</feature>
<feature type="domain" description="GGDEF" evidence="2">
    <location>
        <begin position="299"/>
        <end position="432"/>
    </location>
</feature>
<feature type="domain" description="EAL" evidence="1">
    <location>
        <begin position="443"/>
        <end position="691"/>
    </location>
</feature>
<feature type="modified residue" description="4-aspartylphosphate" evidence="3">
    <location>
        <position position="58"/>
    </location>
</feature>
<feature type="modified residue" description="4-aspartylphosphate" evidence="3">
    <location>
        <position position="188"/>
    </location>
</feature>
<keyword id="KW-0597">Phosphoprotein</keyword>
<keyword id="KW-0677">Repeat</keyword>
<keyword id="KW-0902">Two-component regulatory system</keyword>
<proteinExistence type="inferred from homology"/>
<sequence length="692" mass="76476">MSNAATGSRVLYLGSDQGLMRDLTALVEPKSVQLVQLGSASALAQELRRLAPEVVILDAAAVSVEGGLAAFLGTLYGGEAFHPRAICIARAGSGEDRMEQRLAALRAGAASYLVPPISVKRLASRVLRMCGIVETVRYRILILEQDASHAKKIASLLATIGMETLVVDDPMKILARMQAFRPNLVLMDLYLPGATGSELTTIIRDHDDFYGIPILFLSQEADLDKQLAALKAGGDGFIKKPVSREALIAAVEYRMRMSRWLQDRRTLVNRRETAGGFLPRDVFMRHLEQITRAREAQGGVHGLVIIDVDGSQGILNALGLTATEKLLRELESLLSKTMTPEESATRMDDFRYGLLAKRETLSKLEALASTLCQQLSGLKPQDRDIKLEVSVSVGVGLFDPPADDAFAMVSRAEKAAAGAKSAGGNQAHVWSAASRQNGAPEAESVIKRLVSTALAQDGFLLFFQPILSLNQQEDELYEAQIRMKTLDGEQMPPAEFLSVAERAEMMPRIDRWVLRRAFEVMHAERVAHPRLRLLVHQNVMTLAAPEWFPWFRDQIIKRNLTQIYPVLELQMADVRQNRAEAKVFIERLRKYGIQVCVANVTGIREEISLLARIGATLAKLAFQTIRNADRIQLTEIVQALQARGVAVIAAGIDDQATVSRVWTCRPDFIQGNYLQLPQPELSFDFQHMSHDG</sequence>
<organism>
    <name type="scientific">Thiocystis violacea</name>
    <dbReference type="NCBI Taxonomy" id="13725"/>
    <lineage>
        <taxon>Bacteria</taxon>
        <taxon>Pseudomonadati</taxon>
        <taxon>Pseudomonadota</taxon>
        <taxon>Gammaproteobacteria</taxon>
        <taxon>Chromatiales</taxon>
        <taxon>Chromatiaceae</taxon>
        <taxon>Thiocystis</taxon>
    </lineage>
</organism>
<accession>P45365</accession>
<reference key="1">
    <citation type="journal article" date="1993" name="Appl. Microbiol. Biotechnol.">
        <title>Cloning and molecular analysis of the poly(3-hydroxybutyric acid) biosynthetic genes of Thiocystis violacea.</title>
        <authorList>
            <person name="Liebergesell M."/>
            <person name="Steinbuechel A."/>
        </authorList>
    </citation>
    <scope>NUCLEOTIDE SEQUENCE [GENOMIC DNA]</scope>
    <source>
        <strain>2311 / DSM 208</strain>
    </source>
</reference>
<protein>
    <recommendedName>
        <fullName>Uncharacterized 76.5 kDa protein in phbC 3'region</fullName>
    </recommendedName>
    <alternativeName>
        <fullName>ORF5</fullName>
    </alternativeName>
</protein>
<evidence type="ECO:0000255" key="1">
    <source>
        <dbReference type="PROSITE-ProRule" id="PRU00074"/>
    </source>
</evidence>
<evidence type="ECO:0000255" key="2">
    <source>
        <dbReference type="PROSITE-ProRule" id="PRU00095"/>
    </source>
</evidence>
<evidence type="ECO:0000255" key="3">
    <source>
        <dbReference type="PROSITE-ProRule" id="PRU00169"/>
    </source>
</evidence>